<name>Y256_BUCBP</name>
<evidence type="ECO:0000255" key="1">
    <source>
        <dbReference type="HAMAP-Rule" id="MF_01067"/>
    </source>
</evidence>
<dbReference type="EMBL" id="AE016826">
    <property type="protein sequence ID" value="AAO26983.1"/>
    <property type="molecule type" value="Genomic_DNA"/>
</dbReference>
<dbReference type="RefSeq" id="WP_011091384.1">
    <property type="nucleotide sequence ID" value="NC_004545.1"/>
</dbReference>
<dbReference type="SMR" id="Q89AL2"/>
<dbReference type="STRING" id="224915.bbp_256"/>
<dbReference type="KEGG" id="bab:bbp_256"/>
<dbReference type="eggNOG" id="ENOG502Z96Y">
    <property type="taxonomic scope" value="Bacteria"/>
</dbReference>
<dbReference type="HOGENOM" id="CLU_073287_0_0_6"/>
<dbReference type="OrthoDB" id="6554514at2"/>
<dbReference type="Proteomes" id="UP000000601">
    <property type="component" value="Chromosome"/>
</dbReference>
<dbReference type="GO" id="GO:0005886">
    <property type="term" value="C:plasma membrane"/>
    <property type="evidence" value="ECO:0007669"/>
    <property type="project" value="UniProtKB-SubCell"/>
</dbReference>
<dbReference type="HAMAP" id="MF_01067">
    <property type="entry name" value="UPF0259"/>
    <property type="match status" value="1"/>
</dbReference>
<dbReference type="InterPro" id="IPR009627">
    <property type="entry name" value="UPF0259"/>
</dbReference>
<dbReference type="NCBIfam" id="NF002774">
    <property type="entry name" value="PRK02868.1"/>
    <property type="match status" value="1"/>
</dbReference>
<dbReference type="Pfam" id="PF06790">
    <property type="entry name" value="UPF0259"/>
    <property type="match status" value="1"/>
</dbReference>
<protein>
    <recommendedName>
        <fullName evidence="1">UPF0259 membrane protein bbp_256</fullName>
    </recommendedName>
</protein>
<sequence length="250" mass="29053">MHITANSLFRDTIHFLRSKWPIIVTFVLLSSTITVVIDSIITPNARSLLAFYQLDIKKYHSLLDFVRTLTIDQQKLLLYASIAKSFSLLIGSTFLLGNLITFIQMTSYKKNITLSIFNNIPYKTFFKLLQLIFTTTIITQLGFLLYFIPGFTTIILFSLSPIILLIEEKTILNSIYASINITLSNFKIIVPAIIFWLCFKIFIILIISYFKFFSDFLAYFILNLCINFISSILIIYLFRCYMILPKFLKN</sequence>
<gene>
    <name type="ordered locus">bbp_256</name>
</gene>
<comment type="subcellular location">
    <subcellularLocation>
        <location evidence="1">Cell membrane</location>
        <topology evidence="1">Multi-pass membrane protein</topology>
    </subcellularLocation>
</comment>
<comment type="similarity">
    <text evidence="1">Belongs to the UPF0259 family.</text>
</comment>
<feature type="chain" id="PRO_0000206513" description="UPF0259 membrane protein bbp_256">
    <location>
        <begin position="1"/>
        <end position="250"/>
    </location>
</feature>
<feature type="transmembrane region" description="Helical" evidence="1">
    <location>
        <begin position="21"/>
        <end position="41"/>
    </location>
</feature>
<feature type="transmembrane region" description="Helical" evidence="1">
    <location>
        <begin position="86"/>
        <end position="106"/>
    </location>
</feature>
<feature type="transmembrane region" description="Helical" evidence="1">
    <location>
        <begin position="125"/>
        <end position="145"/>
    </location>
</feature>
<feature type="transmembrane region" description="Helical" evidence="1">
    <location>
        <begin position="146"/>
        <end position="166"/>
    </location>
</feature>
<feature type="transmembrane region" description="Helical" evidence="1">
    <location>
        <begin position="188"/>
        <end position="208"/>
    </location>
</feature>
<feature type="transmembrane region" description="Helical" evidence="1">
    <location>
        <begin position="216"/>
        <end position="236"/>
    </location>
</feature>
<reference key="1">
    <citation type="journal article" date="2003" name="Proc. Natl. Acad. Sci. U.S.A.">
        <title>Reductive genome evolution in Buchnera aphidicola.</title>
        <authorList>
            <person name="van Ham R.C.H.J."/>
            <person name="Kamerbeek J."/>
            <person name="Palacios C."/>
            <person name="Rausell C."/>
            <person name="Abascal F."/>
            <person name="Bastolla U."/>
            <person name="Fernandez J.M."/>
            <person name="Jimenez L."/>
            <person name="Postigo M."/>
            <person name="Silva F.J."/>
            <person name="Tamames J."/>
            <person name="Viguera E."/>
            <person name="Latorre A."/>
            <person name="Valencia A."/>
            <person name="Moran F."/>
            <person name="Moya A."/>
        </authorList>
    </citation>
    <scope>NUCLEOTIDE SEQUENCE [LARGE SCALE GENOMIC DNA]</scope>
    <source>
        <strain>Bp</strain>
    </source>
</reference>
<organism>
    <name type="scientific">Buchnera aphidicola subsp. Baizongia pistaciae (strain Bp)</name>
    <dbReference type="NCBI Taxonomy" id="224915"/>
    <lineage>
        <taxon>Bacteria</taxon>
        <taxon>Pseudomonadati</taxon>
        <taxon>Pseudomonadota</taxon>
        <taxon>Gammaproteobacteria</taxon>
        <taxon>Enterobacterales</taxon>
        <taxon>Erwiniaceae</taxon>
        <taxon>Buchnera</taxon>
    </lineage>
</organism>
<accession>Q89AL2</accession>
<proteinExistence type="inferred from homology"/>
<keyword id="KW-1003">Cell membrane</keyword>
<keyword id="KW-0472">Membrane</keyword>
<keyword id="KW-1185">Reference proteome</keyword>
<keyword id="KW-0812">Transmembrane</keyword>
<keyword id="KW-1133">Transmembrane helix</keyword>